<name>NUOH_XANCB</name>
<organism>
    <name type="scientific">Xanthomonas campestris pv. campestris (strain B100)</name>
    <dbReference type="NCBI Taxonomy" id="509169"/>
    <lineage>
        <taxon>Bacteria</taxon>
        <taxon>Pseudomonadati</taxon>
        <taxon>Pseudomonadota</taxon>
        <taxon>Gammaproteobacteria</taxon>
        <taxon>Lysobacterales</taxon>
        <taxon>Lysobacteraceae</taxon>
        <taxon>Xanthomonas</taxon>
    </lineage>
</organism>
<keyword id="KW-0997">Cell inner membrane</keyword>
<keyword id="KW-1003">Cell membrane</keyword>
<keyword id="KW-0472">Membrane</keyword>
<keyword id="KW-0520">NAD</keyword>
<keyword id="KW-0874">Quinone</keyword>
<keyword id="KW-1278">Translocase</keyword>
<keyword id="KW-0812">Transmembrane</keyword>
<keyword id="KW-1133">Transmembrane helix</keyword>
<keyword id="KW-0830">Ubiquinone</keyword>
<proteinExistence type="inferred from homology"/>
<protein>
    <recommendedName>
        <fullName evidence="1">NADH-quinone oxidoreductase subunit H</fullName>
        <ecNumber evidence="1">7.1.1.-</ecNumber>
    </recommendedName>
    <alternativeName>
        <fullName evidence="1">NADH dehydrogenase I subunit H</fullName>
    </alternativeName>
    <alternativeName>
        <fullName evidence="1">NDH-1 subunit H</fullName>
    </alternativeName>
</protein>
<reference key="1">
    <citation type="journal article" date="2008" name="J. Biotechnol.">
        <title>The genome of Xanthomonas campestris pv. campestris B100 and its use for the reconstruction of metabolic pathways involved in xanthan biosynthesis.</title>
        <authorList>
            <person name="Vorhoelter F.-J."/>
            <person name="Schneiker S."/>
            <person name="Goesmann A."/>
            <person name="Krause L."/>
            <person name="Bekel T."/>
            <person name="Kaiser O."/>
            <person name="Linke B."/>
            <person name="Patschkowski T."/>
            <person name="Rueckert C."/>
            <person name="Schmid J."/>
            <person name="Sidhu V.K."/>
            <person name="Sieber V."/>
            <person name="Tauch A."/>
            <person name="Watt S.A."/>
            <person name="Weisshaar B."/>
            <person name="Becker A."/>
            <person name="Niehaus K."/>
            <person name="Puehler A."/>
        </authorList>
    </citation>
    <scope>NUCLEOTIDE SEQUENCE [LARGE SCALE GENOMIC DNA]</scope>
    <source>
        <strain>B100</strain>
    </source>
</reference>
<dbReference type="EC" id="7.1.1.-" evidence="1"/>
<dbReference type="EMBL" id="AM920689">
    <property type="protein sequence ID" value="CAP50990.1"/>
    <property type="molecule type" value="Genomic_DNA"/>
</dbReference>
<dbReference type="SMR" id="B0RRA5"/>
<dbReference type="KEGG" id="xca:xcc-b100_1640"/>
<dbReference type="HOGENOM" id="CLU_015134_0_1_6"/>
<dbReference type="Proteomes" id="UP000001188">
    <property type="component" value="Chromosome"/>
</dbReference>
<dbReference type="GO" id="GO:0005886">
    <property type="term" value="C:plasma membrane"/>
    <property type="evidence" value="ECO:0007669"/>
    <property type="project" value="UniProtKB-SubCell"/>
</dbReference>
<dbReference type="GO" id="GO:0003954">
    <property type="term" value="F:NADH dehydrogenase activity"/>
    <property type="evidence" value="ECO:0007669"/>
    <property type="project" value="TreeGrafter"/>
</dbReference>
<dbReference type="GO" id="GO:0016655">
    <property type="term" value="F:oxidoreductase activity, acting on NAD(P)H, quinone or similar compound as acceptor"/>
    <property type="evidence" value="ECO:0007669"/>
    <property type="project" value="UniProtKB-UniRule"/>
</dbReference>
<dbReference type="GO" id="GO:0048038">
    <property type="term" value="F:quinone binding"/>
    <property type="evidence" value="ECO:0007669"/>
    <property type="project" value="UniProtKB-KW"/>
</dbReference>
<dbReference type="GO" id="GO:0009060">
    <property type="term" value="P:aerobic respiration"/>
    <property type="evidence" value="ECO:0007669"/>
    <property type="project" value="TreeGrafter"/>
</dbReference>
<dbReference type="HAMAP" id="MF_01350">
    <property type="entry name" value="NDH1_NuoH"/>
    <property type="match status" value="1"/>
</dbReference>
<dbReference type="InterPro" id="IPR001694">
    <property type="entry name" value="NADH_UbQ_OxRdtase_su1/FPO"/>
</dbReference>
<dbReference type="InterPro" id="IPR018086">
    <property type="entry name" value="NADH_UbQ_OxRdtase_su1_CS"/>
</dbReference>
<dbReference type="NCBIfam" id="NF004741">
    <property type="entry name" value="PRK06076.1-2"/>
    <property type="match status" value="1"/>
</dbReference>
<dbReference type="NCBIfam" id="NF004742">
    <property type="entry name" value="PRK06076.1-3"/>
    <property type="match status" value="1"/>
</dbReference>
<dbReference type="PANTHER" id="PTHR11432">
    <property type="entry name" value="NADH DEHYDROGENASE SUBUNIT 1"/>
    <property type="match status" value="1"/>
</dbReference>
<dbReference type="PANTHER" id="PTHR11432:SF3">
    <property type="entry name" value="NADH-UBIQUINONE OXIDOREDUCTASE CHAIN 1"/>
    <property type="match status" value="1"/>
</dbReference>
<dbReference type="Pfam" id="PF00146">
    <property type="entry name" value="NADHdh"/>
    <property type="match status" value="1"/>
</dbReference>
<dbReference type="PROSITE" id="PS00668">
    <property type="entry name" value="COMPLEX1_ND1_2"/>
    <property type="match status" value="1"/>
</dbReference>
<feature type="chain" id="PRO_1000143622" description="NADH-quinone oxidoreductase subunit H">
    <location>
        <begin position="1"/>
        <end position="363"/>
    </location>
</feature>
<feature type="transmembrane region" description="Helical" evidence="1">
    <location>
        <begin position="29"/>
        <end position="49"/>
    </location>
</feature>
<feature type="transmembrane region" description="Helical" evidence="1">
    <location>
        <begin position="62"/>
        <end position="82"/>
    </location>
</feature>
<feature type="transmembrane region" description="Helical" evidence="1">
    <location>
        <begin position="96"/>
        <end position="116"/>
    </location>
</feature>
<feature type="transmembrane region" description="Helical" evidence="1">
    <location>
        <begin position="127"/>
        <end position="147"/>
    </location>
</feature>
<feature type="transmembrane region" description="Helical" evidence="1">
    <location>
        <begin position="163"/>
        <end position="183"/>
    </location>
</feature>
<feature type="transmembrane region" description="Helical" evidence="1">
    <location>
        <begin position="202"/>
        <end position="222"/>
    </location>
</feature>
<feature type="transmembrane region" description="Helical" evidence="1">
    <location>
        <begin position="239"/>
        <end position="257"/>
    </location>
</feature>
<feature type="transmembrane region" description="Helical" evidence="1">
    <location>
        <begin position="264"/>
        <end position="286"/>
    </location>
</feature>
<feature type="transmembrane region" description="Helical" evidence="1">
    <location>
        <begin position="299"/>
        <end position="319"/>
    </location>
</feature>
<feature type="transmembrane region" description="Helical" evidence="1">
    <location>
        <begin position="339"/>
        <end position="359"/>
    </location>
</feature>
<comment type="function">
    <text evidence="1">NDH-1 shuttles electrons from NADH, via FMN and iron-sulfur (Fe-S) centers, to quinones in the respiratory chain. The immediate electron acceptor for the enzyme in this species is believed to be ubiquinone. Couples the redox reaction to proton translocation (for every two electrons transferred, four hydrogen ions are translocated across the cytoplasmic membrane), and thus conserves the redox energy in a proton gradient. This subunit may bind ubiquinone.</text>
</comment>
<comment type="catalytic activity">
    <reaction evidence="1">
        <text>a quinone + NADH + 5 H(+)(in) = a quinol + NAD(+) + 4 H(+)(out)</text>
        <dbReference type="Rhea" id="RHEA:57888"/>
        <dbReference type="ChEBI" id="CHEBI:15378"/>
        <dbReference type="ChEBI" id="CHEBI:24646"/>
        <dbReference type="ChEBI" id="CHEBI:57540"/>
        <dbReference type="ChEBI" id="CHEBI:57945"/>
        <dbReference type="ChEBI" id="CHEBI:132124"/>
    </reaction>
</comment>
<comment type="subunit">
    <text evidence="1">NDH-1 is composed of 14 different subunits. Subunits NuoA, H, J, K, L, M, N constitute the membrane sector of the complex.</text>
</comment>
<comment type="subcellular location">
    <subcellularLocation>
        <location evidence="1">Cell inner membrane</location>
        <topology evidence="1">Multi-pass membrane protein</topology>
    </subcellularLocation>
</comment>
<comment type="similarity">
    <text evidence="1">Belongs to the complex I subunit 1 family.</text>
</comment>
<evidence type="ECO:0000255" key="1">
    <source>
        <dbReference type="HAMAP-Rule" id="MF_01350"/>
    </source>
</evidence>
<gene>
    <name evidence="1" type="primary">nuoH</name>
    <name type="ordered locus">xcc-b100_1640</name>
</gene>
<accession>B0RRA5</accession>
<sequence>MNELLLNVVDPLHQWFLGLGDGGVLLWTVLKILLIAVPVIVTVAFYVVWERKLIGWMHVRHGPMYVGMGIFQAFADVFKLLFKEILQPSSSHKAMFIIAPLLTLAPAFAAWSVVPFDAKLVLSNANVGLLYLLAMTSLGVYGIILAGWASNSKYAFLGAMRSAAQVVSYEIAMGFALVGVMIASGSVNLSQIVFAQAGSSGFFDWFLIPLFPLFIVYWVSGVAETNRAPFDVVEGESEIVAGHMVEYSGGAFALFFLAEYANMILVSFLISIFFLGGWLSPIQGWVTADVSPWVNWLWTGGWPWLLMKVFFFASAYIWFRASFPRYRYDQIMRLGWKVFIPLTIVWIAVTALMVFYGVIQKGV</sequence>